<feature type="chain" id="PRO_0000302056" description="Large ribosomal subunit protein uL5">
    <location>
        <begin position="1"/>
        <end position="182"/>
    </location>
</feature>
<feature type="sequence conflict" description="In Ref. 1; AAB82139." evidence="2" ref="1">
    <original>E</original>
    <variation>D</variation>
    <location>
        <position position="13"/>
    </location>
</feature>
<feature type="sequence conflict" description="In Ref. 1; AAB82139." evidence="2" ref="1">
    <original>S</original>
    <variation>I</variation>
    <location>
        <position position="43"/>
    </location>
</feature>
<feature type="sequence conflict" description="In Ref. 1; AAB82139." evidence="2" ref="1">
    <original>Y</original>
    <variation>C</variation>
    <location>
        <position position="91"/>
    </location>
</feature>
<feature type="sequence conflict" description="In Ref. 1; AAB82139." evidence="2" ref="1">
    <original>NF</original>
    <variation>SC</variation>
    <location>
        <begin position="97"/>
        <end position="98"/>
    </location>
</feature>
<feature type="sequence conflict" description="In Ref. 1; AAB82139." evidence="2" ref="1">
    <original>KY</original>
    <variation>QC</variation>
    <location>
        <begin position="117"/>
        <end position="118"/>
    </location>
</feature>
<feature type="sequence conflict" description="In Ref. 1; AAB82139." evidence="2" ref="1">
    <original>I</original>
    <variation>F</variation>
    <location>
        <position position="124"/>
    </location>
</feature>
<feature type="sequence conflict" description="In Ref. 1; AAB82139." evidence="2" ref="1">
    <original>L</original>
    <variation>F</variation>
    <location>
        <position position="174"/>
    </location>
</feature>
<feature type="sequence conflict" description="In Ref. 1; AAB82139." evidence="2" ref="1">
    <original>T</original>
    <variation>M</variation>
    <location>
        <position position="181"/>
    </location>
</feature>
<gene>
    <name type="primary">RPL11</name>
    <name type="ORF">OsI_022525</name>
</gene>
<accession>A2YDY2</accession>
<accession>O22540</accession>
<accession>Q60EZ4</accession>
<comment type="function">
    <text evidence="1">Component of the ribosome, a large ribonucleoprotein complex responsible for the synthesis of proteins in the cell. The small ribosomal subunit (SSU) binds messenger RNAs (mRNAs) and translates the encoded message by selecting cognate aminoacyl-transfer RNA (tRNA) molecules. The large subunit (LSU) contains the ribosomal catalytic site termed the peptidyl transferase center (PTC), which catalyzes the formation of peptide bonds, thereby polymerizing the amino acids delivered by tRNAs into a polypeptide chain. The nascent polypeptides leave the ribosome through a tunnel in the LSU and interact with protein factors that function in enzymatic processing, targeting, and the membrane insertion of nascent chains at the exit of the ribosomal tunnel.</text>
</comment>
<comment type="subunit">
    <text evidence="1">Component of the large ribosomal subunit.</text>
</comment>
<comment type="subcellular location">
    <subcellularLocation>
        <location evidence="1">Nucleus</location>
    </subcellularLocation>
    <subcellularLocation>
        <location evidence="1">Cytoplasm</location>
    </subcellularLocation>
</comment>
<comment type="similarity">
    <text evidence="2">Belongs to the universal ribosomal protein uL5 family.</text>
</comment>
<keyword id="KW-0963">Cytoplasm</keyword>
<keyword id="KW-0539">Nucleus</keyword>
<keyword id="KW-1185">Reference proteome</keyword>
<keyword id="KW-0687">Ribonucleoprotein</keyword>
<keyword id="KW-0689">Ribosomal protein</keyword>
<keyword id="KW-0694">RNA-binding</keyword>
<keyword id="KW-0699">rRNA-binding</keyword>
<reference key="1">
    <citation type="submission" date="1997-09" db="EMBL/GenBank/DDBJ databases">
        <title>Isolation and characterization of ribosomal protein from rice.</title>
        <authorList>
            <person name="Lee M.C."/>
            <person name="Kim C.S."/>
            <person name="Eun M.Y."/>
        </authorList>
    </citation>
    <scope>NUCLEOTIDE SEQUENCE [MRNA]</scope>
    <source>
        <strain>cv. Milyang 23</strain>
        <tissue>Seed</tissue>
    </source>
</reference>
<reference key="2">
    <citation type="journal article" date="2005" name="PLoS Biol.">
        <title>The genomes of Oryza sativa: a history of duplications.</title>
        <authorList>
            <person name="Yu J."/>
            <person name="Wang J."/>
            <person name="Lin W."/>
            <person name="Li S."/>
            <person name="Li H."/>
            <person name="Zhou J."/>
            <person name="Ni P."/>
            <person name="Dong W."/>
            <person name="Hu S."/>
            <person name="Zeng C."/>
            <person name="Zhang J."/>
            <person name="Zhang Y."/>
            <person name="Li R."/>
            <person name="Xu Z."/>
            <person name="Li S."/>
            <person name="Li X."/>
            <person name="Zheng H."/>
            <person name="Cong L."/>
            <person name="Lin L."/>
            <person name="Yin J."/>
            <person name="Geng J."/>
            <person name="Li G."/>
            <person name="Shi J."/>
            <person name="Liu J."/>
            <person name="Lv H."/>
            <person name="Li J."/>
            <person name="Wang J."/>
            <person name="Deng Y."/>
            <person name="Ran L."/>
            <person name="Shi X."/>
            <person name="Wang X."/>
            <person name="Wu Q."/>
            <person name="Li C."/>
            <person name="Ren X."/>
            <person name="Wang J."/>
            <person name="Wang X."/>
            <person name="Li D."/>
            <person name="Liu D."/>
            <person name="Zhang X."/>
            <person name="Ji Z."/>
            <person name="Zhao W."/>
            <person name="Sun Y."/>
            <person name="Zhang Z."/>
            <person name="Bao J."/>
            <person name="Han Y."/>
            <person name="Dong L."/>
            <person name="Ji J."/>
            <person name="Chen P."/>
            <person name="Wu S."/>
            <person name="Liu J."/>
            <person name="Xiao Y."/>
            <person name="Bu D."/>
            <person name="Tan J."/>
            <person name="Yang L."/>
            <person name="Ye C."/>
            <person name="Zhang J."/>
            <person name="Xu J."/>
            <person name="Zhou Y."/>
            <person name="Yu Y."/>
            <person name="Zhang B."/>
            <person name="Zhuang S."/>
            <person name="Wei H."/>
            <person name="Liu B."/>
            <person name="Lei M."/>
            <person name="Yu H."/>
            <person name="Li Y."/>
            <person name="Xu H."/>
            <person name="Wei S."/>
            <person name="He X."/>
            <person name="Fang L."/>
            <person name="Zhang Z."/>
            <person name="Zhang Y."/>
            <person name="Huang X."/>
            <person name="Su Z."/>
            <person name="Tong W."/>
            <person name="Li J."/>
            <person name="Tong Z."/>
            <person name="Li S."/>
            <person name="Ye J."/>
            <person name="Wang L."/>
            <person name="Fang L."/>
            <person name="Lei T."/>
            <person name="Chen C.-S."/>
            <person name="Chen H.-C."/>
            <person name="Xu Z."/>
            <person name="Li H."/>
            <person name="Huang H."/>
            <person name="Zhang F."/>
            <person name="Xu H."/>
            <person name="Li N."/>
            <person name="Zhao C."/>
            <person name="Li S."/>
            <person name="Dong L."/>
            <person name="Huang Y."/>
            <person name="Li L."/>
            <person name="Xi Y."/>
            <person name="Qi Q."/>
            <person name="Li W."/>
            <person name="Zhang B."/>
            <person name="Hu W."/>
            <person name="Zhang Y."/>
            <person name="Tian X."/>
            <person name="Jiao Y."/>
            <person name="Liang X."/>
            <person name="Jin J."/>
            <person name="Gao L."/>
            <person name="Zheng W."/>
            <person name="Hao B."/>
            <person name="Liu S.-M."/>
            <person name="Wang W."/>
            <person name="Yuan L."/>
            <person name="Cao M."/>
            <person name="McDermott J."/>
            <person name="Samudrala R."/>
            <person name="Wang J."/>
            <person name="Wong G.K.-S."/>
            <person name="Yang H."/>
        </authorList>
    </citation>
    <scope>NUCLEOTIDE SEQUENCE [LARGE SCALE GENOMIC DNA]</scope>
    <source>
        <strain>cv. 93-11</strain>
    </source>
</reference>
<proteinExistence type="evidence at transcript level"/>
<sequence length="182" mass="20836">MASEKKQSNPMREIKVQKLVLNISVGESGDRLTRASKVLEQLSGQSPVFSKARYTVRSFGIRRNEKIACYVTVRGEKAMQLLESGLKVKEYELLRRNFSETGCFGFGIQEHIDLGIKYDPSTGIYGMDFYVVLERAGYRVARRRRCKSRVGIQHRVTKEDAMKWFQVKYEGVILNKAQANTS</sequence>
<name>RL11_ORYSI</name>
<evidence type="ECO:0000250" key="1">
    <source>
        <dbReference type="UniProtKB" id="P0C0W9"/>
    </source>
</evidence>
<evidence type="ECO:0000305" key="2"/>
<protein>
    <recommendedName>
        <fullName evidence="2">Large ribosomal subunit protein uL5</fullName>
    </recommendedName>
    <alternativeName>
        <fullName>60S ribosomal protein L11</fullName>
    </alternativeName>
</protein>
<organism>
    <name type="scientific">Oryza sativa subsp. indica</name>
    <name type="common">Rice</name>
    <dbReference type="NCBI Taxonomy" id="39946"/>
    <lineage>
        <taxon>Eukaryota</taxon>
        <taxon>Viridiplantae</taxon>
        <taxon>Streptophyta</taxon>
        <taxon>Embryophyta</taxon>
        <taxon>Tracheophyta</taxon>
        <taxon>Spermatophyta</taxon>
        <taxon>Magnoliopsida</taxon>
        <taxon>Liliopsida</taxon>
        <taxon>Poales</taxon>
        <taxon>Poaceae</taxon>
        <taxon>BOP clade</taxon>
        <taxon>Oryzoideae</taxon>
        <taxon>Oryzeae</taxon>
        <taxon>Oryzinae</taxon>
        <taxon>Oryza</taxon>
        <taxon>Oryza sativa</taxon>
    </lineage>
</organism>
<dbReference type="EMBL" id="AF022736">
    <property type="protein sequence ID" value="AAB82139.1"/>
    <property type="molecule type" value="mRNA"/>
</dbReference>
<dbReference type="EMBL" id="CM000131">
    <property type="status" value="NOT_ANNOTATED_CDS"/>
    <property type="molecule type" value="Genomic_DNA"/>
</dbReference>
<dbReference type="PIR" id="T02091">
    <property type="entry name" value="T02091"/>
</dbReference>
<dbReference type="SMR" id="A2YDY2"/>
<dbReference type="STRING" id="39946.A2YDY2"/>
<dbReference type="iPTMnet" id="A2YDY2"/>
<dbReference type="EnsemblPlants" id="BGIOSGA019352-TA">
    <property type="protein sequence ID" value="BGIOSGA019352-PA"/>
    <property type="gene ID" value="BGIOSGA019352"/>
</dbReference>
<dbReference type="EnsemblPlants" id="BGIOSGA021063-TA">
    <property type="protein sequence ID" value="BGIOSGA021063-PA"/>
    <property type="gene ID" value="BGIOSGA021063"/>
</dbReference>
<dbReference type="EnsemblPlants" id="OsGoSa_05g0007050.01">
    <property type="protein sequence ID" value="OsGoSa_05g0007050.01"/>
    <property type="gene ID" value="OsGoSa_05g0007050"/>
</dbReference>
<dbReference type="EnsemblPlants" id="OsGoSa_06g0018730.01">
    <property type="protein sequence ID" value="OsGoSa_06g0018730.01"/>
    <property type="gene ID" value="OsGoSa_06g0018730"/>
</dbReference>
<dbReference type="EnsemblPlants" id="OsIR64_05g0006980.01">
    <property type="protein sequence ID" value="OsIR64_05g0006980.01"/>
    <property type="gene ID" value="OsIR64_05g0006980"/>
</dbReference>
<dbReference type="EnsemblPlants" id="OsIR64_06g0018690.01">
    <property type="protein sequence ID" value="OsIR64_06g0018690.01"/>
    <property type="gene ID" value="OsIR64_06g0018690"/>
</dbReference>
<dbReference type="EnsemblPlants" id="OsKYG_05g0006970.01">
    <property type="protein sequence ID" value="OsKYG_05g0006970.01"/>
    <property type="gene ID" value="OsKYG_05g0006970"/>
</dbReference>
<dbReference type="EnsemblPlants" id="OsKYG_06g0019080.01">
    <property type="protein sequence ID" value="OsKYG_06g0019080.01"/>
    <property type="gene ID" value="OsKYG_06g0019080"/>
</dbReference>
<dbReference type="EnsemblPlants" id="OsLaMu_05g0007090.01">
    <property type="protein sequence ID" value="OsLaMu_05g0007090.01"/>
    <property type="gene ID" value="OsLaMu_05g0007090"/>
</dbReference>
<dbReference type="EnsemblPlants" id="OsLaMu_06g0018910.01">
    <property type="protein sequence ID" value="OsLaMu_06g0018910.01"/>
    <property type="gene ID" value="OsLaMu_06g0018910"/>
</dbReference>
<dbReference type="EnsemblPlants" id="OsLima_05g0007040.01">
    <property type="protein sequence ID" value="OsLima_05g0007040.01"/>
    <property type="gene ID" value="OsLima_05g0007040"/>
</dbReference>
<dbReference type="EnsemblPlants" id="OsLima_06g0019140.01">
    <property type="protein sequence ID" value="OsLima_06g0019140.01"/>
    <property type="gene ID" value="OsLima_06g0019140"/>
</dbReference>
<dbReference type="EnsemblPlants" id="OsLiXu_05g0007140.01">
    <property type="protein sequence ID" value="OsLiXu_05g0007140.01"/>
    <property type="gene ID" value="OsLiXu_05g0007140"/>
</dbReference>
<dbReference type="EnsemblPlants" id="OsLiXu_06g0019460.01">
    <property type="protein sequence ID" value="OsLiXu_06g0019460.01"/>
    <property type="gene ID" value="OsLiXu_06g0019460"/>
</dbReference>
<dbReference type="EnsemblPlants" id="OsMH63_05G007120_01">
    <property type="protein sequence ID" value="OsMH63_05G007120_01"/>
    <property type="gene ID" value="OsMH63_05G007120"/>
</dbReference>
<dbReference type="EnsemblPlants" id="OsMH63_06G018920_01">
    <property type="protein sequence ID" value="OsMH63_06G018920_01"/>
    <property type="gene ID" value="OsMH63_06G018920"/>
</dbReference>
<dbReference type="EnsemblPlants" id="OsPr106_05g0007140.01">
    <property type="protein sequence ID" value="OsPr106_05g0007140.01"/>
    <property type="gene ID" value="OsPr106_05g0007140"/>
</dbReference>
<dbReference type="EnsemblPlants" id="OsPr106_06g0019200.01">
    <property type="protein sequence ID" value="OsPr106_06g0019200.01"/>
    <property type="gene ID" value="OsPr106_06g0019200"/>
</dbReference>
<dbReference type="EnsemblPlants" id="OsZS97_05G007160_01">
    <property type="protein sequence ID" value="OsZS97_05G007160_01"/>
    <property type="gene ID" value="OsZS97_05G007160"/>
</dbReference>
<dbReference type="EnsemblPlants" id="OsZS97_06G019150_01">
    <property type="protein sequence ID" value="OsZS97_06G019150_01"/>
    <property type="gene ID" value="OsZS97_06G019150"/>
</dbReference>
<dbReference type="Gramene" id="BGIOSGA019352-TA">
    <property type="protein sequence ID" value="BGIOSGA019352-PA"/>
    <property type="gene ID" value="BGIOSGA019352"/>
</dbReference>
<dbReference type="Gramene" id="BGIOSGA021063-TA">
    <property type="protein sequence ID" value="BGIOSGA021063-PA"/>
    <property type="gene ID" value="BGIOSGA021063"/>
</dbReference>
<dbReference type="Gramene" id="OsGoSa_05g0007050.01">
    <property type="protein sequence ID" value="OsGoSa_05g0007050.01"/>
    <property type="gene ID" value="OsGoSa_05g0007050"/>
</dbReference>
<dbReference type="Gramene" id="OsGoSa_06g0018730.01">
    <property type="protein sequence ID" value="OsGoSa_06g0018730.01"/>
    <property type="gene ID" value="OsGoSa_06g0018730"/>
</dbReference>
<dbReference type="Gramene" id="OsIR64_05g0006980.01">
    <property type="protein sequence ID" value="OsIR64_05g0006980.01"/>
    <property type="gene ID" value="OsIR64_05g0006980"/>
</dbReference>
<dbReference type="Gramene" id="OsIR64_06g0018690.01">
    <property type="protein sequence ID" value="OsIR64_06g0018690.01"/>
    <property type="gene ID" value="OsIR64_06g0018690"/>
</dbReference>
<dbReference type="Gramene" id="OsKYG_05g0006970.01">
    <property type="protein sequence ID" value="OsKYG_05g0006970.01"/>
    <property type="gene ID" value="OsKYG_05g0006970"/>
</dbReference>
<dbReference type="Gramene" id="OsKYG_06g0019080.01">
    <property type="protein sequence ID" value="OsKYG_06g0019080.01"/>
    <property type="gene ID" value="OsKYG_06g0019080"/>
</dbReference>
<dbReference type="Gramene" id="OsLaMu_05g0007090.01">
    <property type="protein sequence ID" value="OsLaMu_05g0007090.01"/>
    <property type="gene ID" value="OsLaMu_05g0007090"/>
</dbReference>
<dbReference type="Gramene" id="OsLaMu_06g0018910.01">
    <property type="protein sequence ID" value="OsLaMu_06g0018910.01"/>
    <property type="gene ID" value="OsLaMu_06g0018910"/>
</dbReference>
<dbReference type="Gramene" id="OsLima_05g0007040.01">
    <property type="protein sequence ID" value="OsLima_05g0007040.01"/>
    <property type="gene ID" value="OsLima_05g0007040"/>
</dbReference>
<dbReference type="Gramene" id="OsLima_06g0019140.01">
    <property type="protein sequence ID" value="OsLima_06g0019140.01"/>
    <property type="gene ID" value="OsLima_06g0019140"/>
</dbReference>
<dbReference type="Gramene" id="OsLiXu_05g0007140.01">
    <property type="protein sequence ID" value="OsLiXu_05g0007140.01"/>
    <property type="gene ID" value="OsLiXu_05g0007140"/>
</dbReference>
<dbReference type="Gramene" id="OsLiXu_06g0019460.01">
    <property type="protein sequence ID" value="OsLiXu_06g0019460.01"/>
    <property type="gene ID" value="OsLiXu_06g0019460"/>
</dbReference>
<dbReference type="Gramene" id="OsMH63_05G007120_01">
    <property type="protein sequence ID" value="OsMH63_05G007120_01"/>
    <property type="gene ID" value="OsMH63_05G007120"/>
</dbReference>
<dbReference type="Gramene" id="OsMH63_06G018920_01">
    <property type="protein sequence ID" value="OsMH63_06G018920_01"/>
    <property type="gene ID" value="OsMH63_06G018920"/>
</dbReference>
<dbReference type="Gramene" id="OsPr106_05g0007140.01">
    <property type="protein sequence ID" value="OsPr106_05g0007140.01"/>
    <property type="gene ID" value="OsPr106_05g0007140"/>
</dbReference>
<dbReference type="Gramene" id="OsPr106_06g0019200.01">
    <property type="protein sequence ID" value="OsPr106_06g0019200.01"/>
    <property type="gene ID" value="OsPr106_06g0019200"/>
</dbReference>
<dbReference type="Gramene" id="OsZS97_05G007160_01">
    <property type="protein sequence ID" value="OsZS97_05G007160_01"/>
    <property type="gene ID" value="OsZS97_05G007160"/>
</dbReference>
<dbReference type="Gramene" id="OsZS97_06G019150_01">
    <property type="protein sequence ID" value="OsZS97_06G019150_01"/>
    <property type="gene ID" value="OsZS97_06G019150"/>
</dbReference>
<dbReference type="HOGENOM" id="CLU_061015_3_0_1"/>
<dbReference type="OMA" id="NPMKELK"/>
<dbReference type="OrthoDB" id="1690215at2759"/>
<dbReference type="Proteomes" id="UP000007015">
    <property type="component" value="Chromosome 6"/>
</dbReference>
<dbReference type="ExpressionAtlas" id="A2YDY2">
    <property type="expression patterns" value="differential"/>
</dbReference>
<dbReference type="GO" id="GO:0005737">
    <property type="term" value="C:cytoplasm"/>
    <property type="evidence" value="ECO:0007669"/>
    <property type="project" value="UniProtKB-SubCell"/>
</dbReference>
<dbReference type="GO" id="GO:0005634">
    <property type="term" value="C:nucleus"/>
    <property type="evidence" value="ECO:0007669"/>
    <property type="project" value="UniProtKB-SubCell"/>
</dbReference>
<dbReference type="GO" id="GO:1990904">
    <property type="term" value="C:ribonucleoprotein complex"/>
    <property type="evidence" value="ECO:0007669"/>
    <property type="project" value="UniProtKB-KW"/>
</dbReference>
<dbReference type="GO" id="GO:0005840">
    <property type="term" value="C:ribosome"/>
    <property type="evidence" value="ECO:0007669"/>
    <property type="project" value="UniProtKB-KW"/>
</dbReference>
<dbReference type="GO" id="GO:0019843">
    <property type="term" value="F:rRNA binding"/>
    <property type="evidence" value="ECO:0007669"/>
    <property type="project" value="UniProtKB-KW"/>
</dbReference>
<dbReference type="GO" id="GO:0003735">
    <property type="term" value="F:structural constituent of ribosome"/>
    <property type="evidence" value="ECO:0007669"/>
    <property type="project" value="InterPro"/>
</dbReference>
<dbReference type="GO" id="GO:0006412">
    <property type="term" value="P:translation"/>
    <property type="evidence" value="ECO:0007669"/>
    <property type="project" value="InterPro"/>
</dbReference>
<dbReference type="FunFam" id="3.30.1440.10:FF:000002">
    <property type="entry name" value="60S ribosomal protein L11"/>
    <property type="match status" value="1"/>
</dbReference>
<dbReference type="Gene3D" id="3.30.1440.10">
    <property type="match status" value="1"/>
</dbReference>
<dbReference type="InterPro" id="IPR002132">
    <property type="entry name" value="Ribosomal_uL5"/>
</dbReference>
<dbReference type="InterPro" id="IPR031309">
    <property type="entry name" value="Ribosomal_uL5_C"/>
</dbReference>
<dbReference type="InterPro" id="IPR020929">
    <property type="entry name" value="Ribosomal_uL5_CS"/>
</dbReference>
<dbReference type="InterPro" id="IPR022803">
    <property type="entry name" value="Ribosomal_uL5_dom_sf"/>
</dbReference>
<dbReference type="InterPro" id="IPR031310">
    <property type="entry name" value="Ribosomal_uL5_N"/>
</dbReference>
<dbReference type="NCBIfam" id="NF003258">
    <property type="entry name" value="PRK04219.1"/>
    <property type="match status" value="1"/>
</dbReference>
<dbReference type="PANTHER" id="PTHR11994">
    <property type="entry name" value="60S RIBOSOMAL PROTEIN L11-RELATED"/>
    <property type="match status" value="1"/>
</dbReference>
<dbReference type="Pfam" id="PF00281">
    <property type="entry name" value="Ribosomal_L5"/>
    <property type="match status" value="1"/>
</dbReference>
<dbReference type="Pfam" id="PF00673">
    <property type="entry name" value="Ribosomal_L5_C"/>
    <property type="match status" value="1"/>
</dbReference>
<dbReference type="PIRSF" id="PIRSF002161">
    <property type="entry name" value="Ribosomal_L5"/>
    <property type="match status" value="1"/>
</dbReference>
<dbReference type="SUPFAM" id="SSF55282">
    <property type="entry name" value="RL5-like"/>
    <property type="match status" value="1"/>
</dbReference>
<dbReference type="PROSITE" id="PS00358">
    <property type="entry name" value="RIBOSOMAL_L5"/>
    <property type="match status" value="1"/>
</dbReference>